<gene>
    <name evidence="1" type="primary">murG</name>
    <name type="ordered locus">PSEEN4485</name>
</gene>
<proteinExistence type="inferred from homology"/>
<evidence type="ECO:0000255" key="1">
    <source>
        <dbReference type="HAMAP-Rule" id="MF_00033"/>
    </source>
</evidence>
<organism>
    <name type="scientific">Pseudomonas entomophila (strain L48)</name>
    <dbReference type="NCBI Taxonomy" id="384676"/>
    <lineage>
        <taxon>Bacteria</taxon>
        <taxon>Pseudomonadati</taxon>
        <taxon>Pseudomonadota</taxon>
        <taxon>Gammaproteobacteria</taxon>
        <taxon>Pseudomonadales</taxon>
        <taxon>Pseudomonadaceae</taxon>
        <taxon>Pseudomonas</taxon>
    </lineage>
</organism>
<feature type="chain" id="PRO_1000002680" description="UDP-N-acetylglucosamine--N-acetylmuramyl-(pentapeptide) pyrophosphoryl-undecaprenol N-acetylglucosamine transferase">
    <location>
        <begin position="1"/>
        <end position="359"/>
    </location>
</feature>
<feature type="binding site" evidence="1">
    <location>
        <begin position="15"/>
        <end position="17"/>
    </location>
    <ligand>
        <name>UDP-N-acetyl-alpha-D-glucosamine</name>
        <dbReference type="ChEBI" id="CHEBI:57705"/>
    </ligand>
</feature>
<feature type="binding site" evidence="1">
    <location>
        <position position="127"/>
    </location>
    <ligand>
        <name>UDP-N-acetyl-alpha-D-glucosamine</name>
        <dbReference type="ChEBI" id="CHEBI:57705"/>
    </ligand>
</feature>
<feature type="binding site" evidence="1">
    <location>
        <position position="166"/>
    </location>
    <ligand>
        <name>UDP-N-acetyl-alpha-D-glucosamine</name>
        <dbReference type="ChEBI" id="CHEBI:57705"/>
    </ligand>
</feature>
<feature type="binding site" evidence="1">
    <location>
        <position position="191"/>
    </location>
    <ligand>
        <name>UDP-N-acetyl-alpha-D-glucosamine</name>
        <dbReference type="ChEBI" id="CHEBI:57705"/>
    </ligand>
</feature>
<feature type="binding site" evidence="1">
    <location>
        <position position="245"/>
    </location>
    <ligand>
        <name>UDP-N-acetyl-alpha-D-glucosamine</name>
        <dbReference type="ChEBI" id="CHEBI:57705"/>
    </ligand>
</feature>
<feature type="binding site" evidence="1">
    <location>
        <begin position="264"/>
        <end position="269"/>
    </location>
    <ligand>
        <name>UDP-N-acetyl-alpha-D-glucosamine</name>
        <dbReference type="ChEBI" id="CHEBI:57705"/>
    </ligand>
</feature>
<feature type="binding site" evidence="1">
    <location>
        <position position="290"/>
    </location>
    <ligand>
        <name>UDP-N-acetyl-alpha-D-glucosamine</name>
        <dbReference type="ChEBI" id="CHEBI:57705"/>
    </ligand>
</feature>
<sequence>MAADGKNVLIMAGGTGGHVFPALACAREFQARGYSVHWLGTPRGIENELVPQAGLPLHLIQVTGLRGKGKLSLLKAPFTLVKAVLQARRIVRELKPVCVIGFGGYVTGPGGVAARLCGVPLVIHEQNARAGTANRLLVPLAARVCEAFPGTFEANDKLRTTGNPVRPELFMDAQRAPLAERRARLLVMGGSLGAEPLNKLLPKALSEVPANLRPEVFHQAGKNHAPTTAERYHEAGVEAQVEPFIKDMAHAYGWADMVVCRAGALTVSELAAAGLPSVLVPLPHAIDDHQTHNAQYLAREGAAFLMPQATTGAAQLAERLNEVLMQPEKLNTMAGTARRLAKPAATSTVVDICLEVAHG</sequence>
<comment type="function">
    <text evidence="1">Cell wall formation. Catalyzes the transfer of a GlcNAc subunit on undecaprenyl-pyrophosphoryl-MurNAc-pentapeptide (lipid intermediate I) to form undecaprenyl-pyrophosphoryl-MurNAc-(pentapeptide)GlcNAc (lipid intermediate II).</text>
</comment>
<comment type="catalytic activity">
    <reaction evidence="1">
        <text>di-trans,octa-cis-undecaprenyl diphospho-N-acetyl-alpha-D-muramoyl-L-alanyl-D-glutamyl-meso-2,6-diaminopimeloyl-D-alanyl-D-alanine + UDP-N-acetyl-alpha-D-glucosamine = di-trans,octa-cis-undecaprenyl diphospho-[N-acetyl-alpha-D-glucosaminyl-(1-&gt;4)]-N-acetyl-alpha-D-muramoyl-L-alanyl-D-glutamyl-meso-2,6-diaminopimeloyl-D-alanyl-D-alanine + UDP + H(+)</text>
        <dbReference type="Rhea" id="RHEA:31227"/>
        <dbReference type="ChEBI" id="CHEBI:15378"/>
        <dbReference type="ChEBI" id="CHEBI:57705"/>
        <dbReference type="ChEBI" id="CHEBI:58223"/>
        <dbReference type="ChEBI" id="CHEBI:61387"/>
        <dbReference type="ChEBI" id="CHEBI:61388"/>
        <dbReference type="EC" id="2.4.1.227"/>
    </reaction>
</comment>
<comment type="pathway">
    <text evidence="1">Cell wall biogenesis; peptidoglycan biosynthesis.</text>
</comment>
<comment type="subcellular location">
    <subcellularLocation>
        <location evidence="1">Cell inner membrane</location>
        <topology evidence="1">Peripheral membrane protein</topology>
        <orientation evidence="1">Cytoplasmic side</orientation>
    </subcellularLocation>
</comment>
<comment type="similarity">
    <text evidence="1">Belongs to the glycosyltransferase 28 family. MurG subfamily.</text>
</comment>
<name>MURG_PSEE4</name>
<protein>
    <recommendedName>
        <fullName evidence="1">UDP-N-acetylglucosamine--N-acetylmuramyl-(pentapeptide) pyrophosphoryl-undecaprenol N-acetylglucosamine transferase</fullName>
        <ecNumber evidence="1">2.4.1.227</ecNumber>
    </recommendedName>
    <alternativeName>
        <fullName evidence="1">Undecaprenyl-PP-MurNAc-pentapeptide-UDPGlcNAc GlcNAc transferase</fullName>
    </alternativeName>
</protein>
<reference key="1">
    <citation type="journal article" date="2006" name="Nat. Biotechnol.">
        <title>Complete genome sequence of the entomopathogenic and metabolically versatile soil bacterium Pseudomonas entomophila.</title>
        <authorList>
            <person name="Vodovar N."/>
            <person name="Vallenet D."/>
            <person name="Cruveiller S."/>
            <person name="Rouy Z."/>
            <person name="Barbe V."/>
            <person name="Acosta C."/>
            <person name="Cattolico L."/>
            <person name="Jubin C."/>
            <person name="Lajus A."/>
            <person name="Segurens B."/>
            <person name="Vacherie B."/>
            <person name="Wincker P."/>
            <person name="Weissenbach J."/>
            <person name="Lemaitre B."/>
            <person name="Medigue C."/>
            <person name="Boccard F."/>
        </authorList>
    </citation>
    <scope>NUCLEOTIDE SEQUENCE [LARGE SCALE GENOMIC DNA]</scope>
    <source>
        <strain>L48</strain>
    </source>
</reference>
<accession>Q1I5B8</accession>
<dbReference type="EC" id="2.4.1.227" evidence="1"/>
<dbReference type="EMBL" id="CT573326">
    <property type="protein sequence ID" value="CAK17167.1"/>
    <property type="molecule type" value="Genomic_DNA"/>
</dbReference>
<dbReference type="RefSeq" id="WP_011535537.1">
    <property type="nucleotide sequence ID" value="NC_008027.1"/>
</dbReference>
<dbReference type="SMR" id="Q1I5B8"/>
<dbReference type="STRING" id="384676.PSEEN4485"/>
<dbReference type="CAZy" id="GT28">
    <property type="family name" value="Glycosyltransferase Family 28"/>
</dbReference>
<dbReference type="GeneID" id="32807481"/>
<dbReference type="KEGG" id="pen:PSEEN4485"/>
<dbReference type="eggNOG" id="COG0707">
    <property type="taxonomic scope" value="Bacteria"/>
</dbReference>
<dbReference type="HOGENOM" id="CLU_037404_2_0_6"/>
<dbReference type="OrthoDB" id="9808936at2"/>
<dbReference type="UniPathway" id="UPA00219"/>
<dbReference type="Proteomes" id="UP000000658">
    <property type="component" value="Chromosome"/>
</dbReference>
<dbReference type="GO" id="GO:0005886">
    <property type="term" value="C:plasma membrane"/>
    <property type="evidence" value="ECO:0007669"/>
    <property type="project" value="UniProtKB-SubCell"/>
</dbReference>
<dbReference type="GO" id="GO:0051991">
    <property type="term" value="F:UDP-N-acetyl-D-glucosamine:N-acetylmuramoyl-L-alanyl-D-glutamyl-meso-2,6-diaminopimelyl-D-alanyl-D-alanine-diphosphoundecaprenol 4-beta-N-acetylglucosaminlytransferase activity"/>
    <property type="evidence" value="ECO:0007669"/>
    <property type="project" value="RHEA"/>
</dbReference>
<dbReference type="GO" id="GO:0050511">
    <property type="term" value="F:undecaprenyldiphospho-muramoylpentapeptide beta-N-acetylglucosaminyltransferase activity"/>
    <property type="evidence" value="ECO:0007669"/>
    <property type="project" value="UniProtKB-UniRule"/>
</dbReference>
<dbReference type="GO" id="GO:0005975">
    <property type="term" value="P:carbohydrate metabolic process"/>
    <property type="evidence" value="ECO:0007669"/>
    <property type="project" value="InterPro"/>
</dbReference>
<dbReference type="GO" id="GO:0051301">
    <property type="term" value="P:cell division"/>
    <property type="evidence" value="ECO:0007669"/>
    <property type="project" value="UniProtKB-KW"/>
</dbReference>
<dbReference type="GO" id="GO:0071555">
    <property type="term" value="P:cell wall organization"/>
    <property type="evidence" value="ECO:0007669"/>
    <property type="project" value="UniProtKB-KW"/>
</dbReference>
<dbReference type="GO" id="GO:0030259">
    <property type="term" value="P:lipid glycosylation"/>
    <property type="evidence" value="ECO:0007669"/>
    <property type="project" value="UniProtKB-UniRule"/>
</dbReference>
<dbReference type="GO" id="GO:0009252">
    <property type="term" value="P:peptidoglycan biosynthetic process"/>
    <property type="evidence" value="ECO:0007669"/>
    <property type="project" value="UniProtKB-UniRule"/>
</dbReference>
<dbReference type="GO" id="GO:0008360">
    <property type="term" value="P:regulation of cell shape"/>
    <property type="evidence" value="ECO:0007669"/>
    <property type="project" value="UniProtKB-KW"/>
</dbReference>
<dbReference type="CDD" id="cd03785">
    <property type="entry name" value="GT28_MurG"/>
    <property type="match status" value="1"/>
</dbReference>
<dbReference type="Gene3D" id="3.40.50.2000">
    <property type="entry name" value="Glycogen Phosphorylase B"/>
    <property type="match status" value="2"/>
</dbReference>
<dbReference type="HAMAP" id="MF_00033">
    <property type="entry name" value="MurG"/>
    <property type="match status" value="1"/>
</dbReference>
<dbReference type="InterPro" id="IPR006009">
    <property type="entry name" value="GlcNAc_MurG"/>
</dbReference>
<dbReference type="InterPro" id="IPR007235">
    <property type="entry name" value="Glyco_trans_28_C"/>
</dbReference>
<dbReference type="InterPro" id="IPR004276">
    <property type="entry name" value="GlycoTrans_28_N"/>
</dbReference>
<dbReference type="NCBIfam" id="TIGR01133">
    <property type="entry name" value="murG"/>
    <property type="match status" value="1"/>
</dbReference>
<dbReference type="PANTHER" id="PTHR21015:SF22">
    <property type="entry name" value="GLYCOSYLTRANSFERASE"/>
    <property type="match status" value="1"/>
</dbReference>
<dbReference type="PANTHER" id="PTHR21015">
    <property type="entry name" value="UDP-N-ACETYLGLUCOSAMINE--N-ACETYLMURAMYL-(PENTAPEPTIDE) PYROPHOSPHORYL-UNDECAPRENOL N-ACETYLGLUCOSAMINE TRANSFERASE 1"/>
    <property type="match status" value="1"/>
</dbReference>
<dbReference type="Pfam" id="PF04101">
    <property type="entry name" value="Glyco_tran_28_C"/>
    <property type="match status" value="1"/>
</dbReference>
<dbReference type="Pfam" id="PF03033">
    <property type="entry name" value="Glyco_transf_28"/>
    <property type="match status" value="1"/>
</dbReference>
<dbReference type="SUPFAM" id="SSF53756">
    <property type="entry name" value="UDP-Glycosyltransferase/glycogen phosphorylase"/>
    <property type="match status" value="1"/>
</dbReference>
<keyword id="KW-0131">Cell cycle</keyword>
<keyword id="KW-0132">Cell division</keyword>
<keyword id="KW-0997">Cell inner membrane</keyword>
<keyword id="KW-1003">Cell membrane</keyword>
<keyword id="KW-0133">Cell shape</keyword>
<keyword id="KW-0961">Cell wall biogenesis/degradation</keyword>
<keyword id="KW-0328">Glycosyltransferase</keyword>
<keyword id="KW-0472">Membrane</keyword>
<keyword id="KW-0573">Peptidoglycan synthesis</keyword>
<keyword id="KW-0808">Transferase</keyword>